<proteinExistence type="evidence at protein level"/>
<gene>
    <name evidence="17" type="primary">GATA22</name>
    <name evidence="18" type="synonym">CGA1</name>
    <name evidence="19" type="synonym">GNL</name>
    <name evidence="22" type="ordered locus">At4g26150</name>
    <name evidence="23" type="ORF">F20B18.260</name>
</gene>
<organism>
    <name type="scientific">Arabidopsis thaliana</name>
    <name type="common">Mouse-ear cress</name>
    <dbReference type="NCBI Taxonomy" id="3702"/>
    <lineage>
        <taxon>Eukaryota</taxon>
        <taxon>Viridiplantae</taxon>
        <taxon>Streptophyta</taxon>
        <taxon>Embryophyta</taxon>
        <taxon>Tracheophyta</taxon>
        <taxon>Spermatophyta</taxon>
        <taxon>Magnoliopsida</taxon>
        <taxon>eudicotyledons</taxon>
        <taxon>Gunneridae</taxon>
        <taxon>Pentapetalae</taxon>
        <taxon>rosids</taxon>
        <taxon>malvids</taxon>
        <taxon>Brassicales</taxon>
        <taxon>Brassicaceae</taxon>
        <taxon>Camelineae</taxon>
        <taxon>Arabidopsis</taxon>
    </lineage>
</organism>
<dbReference type="EMBL" id="AL049483">
    <property type="protein sequence ID" value="CAB39680.1"/>
    <property type="molecule type" value="Genomic_DNA"/>
</dbReference>
<dbReference type="EMBL" id="AL161564">
    <property type="protein sequence ID" value="CAB79470.1"/>
    <property type="molecule type" value="Genomic_DNA"/>
</dbReference>
<dbReference type="EMBL" id="CP002687">
    <property type="protein sequence ID" value="AEE85164.1"/>
    <property type="molecule type" value="Genomic_DNA"/>
</dbReference>
<dbReference type="EMBL" id="DQ875131">
    <property type="protein sequence ID" value="ABL73201.1"/>
    <property type="molecule type" value="mRNA"/>
</dbReference>
<dbReference type="PIR" id="T04270">
    <property type="entry name" value="T04270"/>
</dbReference>
<dbReference type="RefSeq" id="NP_194345.1">
    <property type="nucleotide sequence ID" value="NM_118748.3"/>
</dbReference>
<dbReference type="SMR" id="Q9SZI6"/>
<dbReference type="BioGRID" id="14008">
    <property type="interactions" value="4"/>
</dbReference>
<dbReference type="FunCoup" id="Q9SZI6">
    <property type="interactions" value="22"/>
</dbReference>
<dbReference type="IntAct" id="Q9SZI6">
    <property type="interactions" value="4"/>
</dbReference>
<dbReference type="STRING" id="3702.Q9SZI6"/>
<dbReference type="PaxDb" id="3702-AT4G26150.1"/>
<dbReference type="EnsemblPlants" id="AT4G26150.1">
    <property type="protein sequence ID" value="AT4G26150.1"/>
    <property type="gene ID" value="AT4G26150"/>
</dbReference>
<dbReference type="GeneID" id="828721"/>
<dbReference type="Gramene" id="AT4G26150.1">
    <property type="protein sequence ID" value="AT4G26150.1"/>
    <property type="gene ID" value="AT4G26150"/>
</dbReference>
<dbReference type="KEGG" id="ath:AT4G26150"/>
<dbReference type="Araport" id="AT4G26150"/>
<dbReference type="TAIR" id="AT4G26150">
    <property type="gene designation" value="CGA1"/>
</dbReference>
<dbReference type="eggNOG" id="KOG1601">
    <property type="taxonomic scope" value="Eukaryota"/>
</dbReference>
<dbReference type="HOGENOM" id="CLU_060197_0_1_1"/>
<dbReference type="InParanoid" id="Q9SZI6"/>
<dbReference type="OMA" id="MKFKENN"/>
<dbReference type="PhylomeDB" id="Q9SZI6"/>
<dbReference type="PRO" id="PR:Q9SZI6"/>
<dbReference type="Proteomes" id="UP000006548">
    <property type="component" value="Chromosome 4"/>
</dbReference>
<dbReference type="ExpressionAtlas" id="Q9SZI6">
    <property type="expression patterns" value="baseline and differential"/>
</dbReference>
<dbReference type="GO" id="GO:0005634">
    <property type="term" value="C:nucleus"/>
    <property type="evidence" value="ECO:0000315"/>
    <property type="project" value="UniProtKB"/>
</dbReference>
<dbReference type="GO" id="GO:0003700">
    <property type="term" value="F:DNA-binding transcription factor activity"/>
    <property type="evidence" value="ECO:0000250"/>
    <property type="project" value="TAIR"/>
</dbReference>
<dbReference type="GO" id="GO:0000976">
    <property type="term" value="F:transcription cis-regulatory region binding"/>
    <property type="evidence" value="ECO:0000314"/>
    <property type="project" value="TAIR"/>
</dbReference>
<dbReference type="GO" id="GO:0008270">
    <property type="term" value="F:zinc ion binding"/>
    <property type="evidence" value="ECO:0007669"/>
    <property type="project" value="UniProtKB-KW"/>
</dbReference>
<dbReference type="GO" id="GO:0010151">
    <property type="term" value="P:chloroplast elongation"/>
    <property type="evidence" value="ECO:0000315"/>
    <property type="project" value="UniProtKB"/>
</dbReference>
<dbReference type="GO" id="GO:0009658">
    <property type="term" value="P:chloroplast organization"/>
    <property type="evidence" value="ECO:0000315"/>
    <property type="project" value="UniProtKB"/>
</dbReference>
<dbReference type="GO" id="GO:0007623">
    <property type="term" value="P:circadian rhythm"/>
    <property type="evidence" value="ECO:0000270"/>
    <property type="project" value="TAIR"/>
</dbReference>
<dbReference type="GO" id="GO:0009736">
    <property type="term" value="P:cytokinin-activated signaling pathway"/>
    <property type="evidence" value="ECO:0000315"/>
    <property type="project" value="UniProtKB"/>
</dbReference>
<dbReference type="GO" id="GO:0009740">
    <property type="term" value="P:gibberellic acid mediated signaling pathway"/>
    <property type="evidence" value="ECO:0000270"/>
    <property type="project" value="TAIR"/>
</dbReference>
<dbReference type="GO" id="GO:0009910">
    <property type="term" value="P:negative regulation of flower development"/>
    <property type="evidence" value="ECO:0000315"/>
    <property type="project" value="TAIR"/>
</dbReference>
<dbReference type="GO" id="GO:0009938">
    <property type="term" value="P:negative regulation of gibberellic acid mediated signaling pathway"/>
    <property type="evidence" value="ECO:0000315"/>
    <property type="project" value="UniProtKB"/>
</dbReference>
<dbReference type="GO" id="GO:0010187">
    <property type="term" value="P:negative regulation of seed germination"/>
    <property type="evidence" value="ECO:0000270"/>
    <property type="project" value="TAIR"/>
</dbReference>
<dbReference type="GO" id="GO:0090693">
    <property type="term" value="P:plant organ senescence"/>
    <property type="evidence" value="ECO:0000315"/>
    <property type="project" value="UniProtKB"/>
</dbReference>
<dbReference type="GO" id="GO:1902326">
    <property type="term" value="P:positive regulation of chlorophyll biosynthetic process"/>
    <property type="evidence" value="ECO:0000315"/>
    <property type="project" value="UniProtKB"/>
</dbReference>
<dbReference type="GO" id="GO:0043610">
    <property type="term" value="P:regulation of carbohydrate utilization"/>
    <property type="evidence" value="ECO:0000315"/>
    <property type="project" value="UniProtKB"/>
</dbReference>
<dbReference type="GO" id="GO:0010380">
    <property type="term" value="P:regulation of chlorophyll biosynthetic process"/>
    <property type="evidence" value="ECO:0000315"/>
    <property type="project" value="TAIR"/>
</dbReference>
<dbReference type="GO" id="GO:0010468">
    <property type="term" value="P:regulation of gene expression"/>
    <property type="evidence" value="ECO:0000314"/>
    <property type="project" value="TAIR"/>
</dbReference>
<dbReference type="GO" id="GO:2000028">
    <property type="term" value="P:regulation of photoperiodism, flowering"/>
    <property type="evidence" value="ECO:0000315"/>
    <property type="project" value="UniProtKB"/>
</dbReference>
<dbReference type="GO" id="GO:0080050">
    <property type="term" value="P:regulation of seed development"/>
    <property type="evidence" value="ECO:0000315"/>
    <property type="project" value="UniProtKB"/>
</dbReference>
<dbReference type="GO" id="GO:0010029">
    <property type="term" value="P:regulation of seed germination"/>
    <property type="evidence" value="ECO:0000315"/>
    <property type="project" value="UniProtKB"/>
</dbReference>
<dbReference type="GO" id="GO:0009733">
    <property type="term" value="P:response to auxin"/>
    <property type="evidence" value="ECO:0000270"/>
    <property type="project" value="UniProtKB"/>
</dbReference>
<dbReference type="GO" id="GO:0009735">
    <property type="term" value="P:response to cytokinin"/>
    <property type="evidence" value="ECO:0000270"/>
    <property type="project" value="UniProtKB"/>
</dbReference>
<dbReference type="GO" id="GO:0009739">
    <property type="term" value="P:response to gibberellin"/>
    <property type="evidence" value="ECO:0000270"/>
    <property type="project" value="UniProtKB"/>
</dbReference>
<dbReference type="GO" id="GO:0009416">
    <property type="term" value="P:response to light stimulus"/>
    <property type="evidence" value="ECO:0000270"/>
    <property type="project" value="UniProtKB"/>
</dbReference>
<dbReference type="GO" id="GO:0010167">
    <property type="term" value="P:response to nitrate"/>
    <property type="evidence" value="ECO:0000304"/>
    <property type="project" value="UniProtKB"/>
</dbReference>
<dbReference type="GO" id="GO:0010114">
    <property type="term" value="P:response to red light"/>
    <property type="evidence" value="ECO:0000270"/>
    <property type="project" value="UniProtKB"/>
</dbReference>
<dbReference type="CDD" id="cd00202">
    <property type="entry name" value="ZnF_GATA"/>
    <property type="match status" value="1"/>
</dbReference>
<dbReference type="FunFam" id="3.30.50.10:FF:000055">
    <property type="entry name" value="GATA transcription factor 21"/>
    <property type="match status" value="1"/>
</dbReference>
<dbReference type="Gene3D" id="3.30.50.10">
    <property type="entry name" value="Erythroid Transcription Factor GATA-1, subunit A"/>
    <property type="match status" value="1"/>
</dbReference>
<dbReference type="InterPro" id="IPR052138">
    <property type="entry name" value="GATA_ZnFinger_Domain"/>
</dbReference>
<dbReference type="InterPro" id="IPR000679">
    <property type="entry name" value="Znf_GATA"/>
</dbReference>
<dbReference type="InterPro" id="IPR013088">
    <property type="entry name" value="Znf_NHR/GATA"/>
</dbReference>
<dbReference type="PANTHER" id="PTHR47255">
    <property type="entry name" value="GATA TRANSCRIPTION FACTOR 22-RELATED"/>
    <property type="match status" value="1"/>
</dbReference>
<dbReference type="PANTHER" id="PTHR47255:SF4">
    <property type="entry name" value="GATA ZINC FINGER DOMAIN-CONTAINING PROTEIN 12"/>
    <property type="match status" value="1"/>
</dbReference>
<dbReference type="Pfam" id="PF00320">
    <property type="entry name" value="GATA"/>
    <property type="match status" value="1"/>
</dbReference>
<dbReference type="SMART" id="SM00401">
    <property type="entry name" value="ZnF_GATA"/>
    <property type="match status" value="1"/>
</dbReference>
<dbReference type="SUPFAM" id="SSF57716">
    <property type="entry name" value="Glucocorticoid receptor-like (DNA-binding domain)"/>
    <property type="match status" value="1"/>
</dbReference>
<dbReference type="PROSITE" id="PS00344">
    <property type="entry name" value="GATA_ZN_FINGER_1"/>
    <property type="match status" value="1"/>
</dbReference>
<dbReference type="PROSITE" id="PS50114">
    <property type="entry name" value="GATA_ZN_FINGER_2"/>
    <property type="match status" value="1"/>
</dbReference>
<keyword id="KW-0932">Cytokinin signaling pathway</keyword>
<keyword id="KW-0238">DNA-binding</keyword>
<keyword id="KW-0939">Gibberellin signaling pathway</keyword>
<keyword id="KW-0479">Metal-binding</keyword>
<keyword id="KW-0539">Nucleus</keyword>
<keyword id="KW-1185">Reference proteome</keyword>
<keyword id="KW-0804">Transcription</keyword>
<keyword id="KW-0805">Transcription regulation</keyword>
<keyword id="KW-0862">Zinc</keyword>
<keyword id="KW-0863">Zinc-finger</keyword>
<sequence length="352" mass="39345">MGSNFHYTIDLNEDQNHQPFFASLGSSLHHHLQQQQQQQQHFHHQASSNPSSLMSPSLSYFPFLINSRQDQVYVGYNNNTFHDVLDTHISQPLETKNFVSDGGSSSSDQMVPKKETRLKLTIKKKDNHQDQTDLPQSPIKDMTGTNSLKWISSKVRLMKKKKAIITTSDSSKQHTNNDQSSNLSNSERQNGYNNDCVIRICSDCNTTKTPLWRSGPRGPKSLCNACGIRQRKARRAAMATATATAVSGVSPPVMKKKMQNKNKISNGVYKILSPLPLKVNTCKRMITLEETALAEDLETQSNSTMLSSSDNIYFDDLALLLSKSSAYQQVFPQDEKEAAILLMALSHGMVHG</sequence>
<protein>
    <recommendedName>
        <fullName evidence="17">Putative GATA transcription factor 22</fullName>
    </recommendedName>
    <alternativeName>
        <fullName evidence="18">Protein CYTOKININ-RESPONSIVE GATA FACTOR 1</fullName>
    </alternativeName>
    <alternativeName>
        <fullName evidence="19">Protein GNC-LIKE</fullName>
        <shortName evidence="20">AtGNL</shortName>
    </alternativeName>
</protein>
<name>GAT22_ARATH</name>
<evidence type="ECO:0000255" key="1">
    <source>
        <dbReference type="PROSITE-ProRule" id="PRU00094"/>
    </source>
</evidence>
<evidence type="ECO:0000255" key="2">
    <source>
        <dbReference type="PROSITE-ProRule" id="PRU00768"/>
    </source>
</evidence>
<evidence type="ECO:0000256" key="3">
    <source>
        <dbReference type="SAM" id="MobiDB-lite"/>
    </source>
</evidence>
<evidence type="ECO:0000269" key="4">
    <source>
    </source>
</evidence>
<evidence type="ECO:0000269" key="5">
    <source>
    </source>
</evidence>
<evidence type="ECO:0000269" key="6">
    <source>
    </source>
</evidence>
<evidence type="ECO:0000269" key="7">
    <source>
    </source>
</evidence>
<evidence type="ECO:0000269" key="8">
    <source>
    </source>
</evidence>
<evidence type="ECO:0000269" key="9">
    <source>
    </source>
</evidence>
<evidence type="ECO:0000269" key="10">
    <source>
    </source>
</evidence>
<evidence type="ECO:0000269" key="11">
    <source>
    </source>
</evidence>
<evidence type="ECO:0000269" key="12">
    <source>
    </source>
</evidence>
<evidence type="ECO:0000269" key="13">
    <source>
    </source>
</evidence>
<evidence type="ECO:0000269" key="14">
    <source>
    </source>
</evidence>
<evidence type="ECO:0000269" key="15">
    <source>
    </source>
</evidence>
<evidence type="ECO:0000303" key="16">
    <source>
    </source>
</evidence>
<evidence type="ECO:0000303" key="17">
    <source>
    </source>
</evidence>
<evidence type="ECO:0000303" key="18">
    <source>
    </source>
</evidence>
<evidence type="ECO:0000303" key="19">
    <source>
    </source>
</evidence>
<evidence type="ECO:0000303" key="20">
    <source>
    </source>
</evidence>
<evidence type="ECO:0000305" key="21"/>
<evidence type="ECO:0000312" key="22">
    <source>
        <dbReference type="Araport" id="AT4G26150"/>
    </source>
</evidence>
<evidence type="ECO:0000312" key="23">
    <source>
        <dbReference type="EMBL" id="CAB39680.1"/>
    </source>
</evidence>
<accession>Q9SZI6</accession>
<accession>A3E4C1</accession>
<comment type="function">
    <text evidence="7 8 9 10 11 13 14 15">Transcriptional regulator that specifically binds 5'-GATA-3' or 5'-GAT-3' motifs within gene promoters (PubMed:22102866, PubMed:25077795). Involved in the modulation of chloroplast development, growth and division in a cytokinin-dependent manner (PubMed:22102866, PubMed:22811435). Repressor of the gibberellic acid (GA) signaling pathway that regulates flowering and modulates greening, in a SOC1-dependent manner (PubMed:20844019, PubMed:23739688, PubMed:25077795). Prevents the accumulation of SOC1 during flowering (PubMed:23739688). Promotes chlorophyll biosynthesis throughout the plant, by regulating chlorophyll biosynthetic genes (e.g. HEMA1 and GUN4) and chloroplast localized glutamate synthase (e.g. GLU1) (PubMed:18417639, PubMed:20844019, PubMed:21453984, PubMed:22102866, PubMed:23878229, PubMed:25077795). Involved in the regulation of sugar-sensing genes (e.g. HXK1, HXK2, STP13 and PLT6) (PubMed:18417639). Regulator of germination, senescence, elongation growth and flowering time (PubMed:20844019, PubMed:22102866, PubMed:23878229). Influences also leaf starch content (PubMed:22102866).</text>
</comment>
<comment type="subunit">
    <text evidence="12">Forms heterodimers with GATA18.</text>
</comment>
<comment type="subcellular location">
    <subcellularLocation>
        <location evidence="2 11">Nucleus</location>
    </subcellularLocation>
</comment>
<comment type="tissue specificity">
    <text evidence="5 6 7 11">Expressed predominantly in leaves, and barely in stems, flowers and siliques.</text>
</comment>
<comment type="developmental stage">
    <text evidence="7 8 11 12">First observed in the inflorescence meristem (IM) and young flower buds (PubMed:23335616). Detected throughout the floral bud. In young flowers, restricted to the inner whorls, specifically the petals, stamens, and carpels (PubMed:18417639, PubMed:23335616). In older flowers, accumulates more in the stamens than in the petals and carpels (PubMed:18417639). Observed in anther locules, vascular strands, and ovules (PubMed:23335616). During imbibition, expressed in the endosperm, especially at the time of testa rupture. Later restricted to the cotyledons (PubMed:20844019). In mature embryos, restricted to the cotyledons. In young seedlings, mostly expressed in shoot tissues, including the tip, circumference, and vasculature of the cotyledons, the emerging leaves, the meristematic region, and the basal part of the hypocotyl, and, at low levels, in the primary roots. In older seedlings, accumulates in the green shoot tissues (PubMed:22811435).</text>
</comment>
<comment type="induction">
    <text evidence="4 5 6 7 8 9 11 12 13 14 16">By light (including both red and white lights) (PubMed:17208962, PubMed:17587690). Levels follow a circadian and diurnal rhythm, with a peak at 20 hours, thus preempting dawn (PubMed:17208962). Activated by gibberellic acid (GA) (PubMed:20844019). Induced by cytokinin and derivatives (e.g. benzyladenine, t-Zeatin and 6-benzylaminopurine) in light conditions (PubMed:16212609, PubMed:17587690, PubMed:21453984, PubMed:22811435). Triggered by nitrate (PubMed:16262716). Negatively regulated by AP3/PI (PubMed:18417639). Strong accumulation during cold imbibition of nondormant seeds, but not at warm temperatures. Regulated by PIF transcription factors (PubMed:20844019). Repressed by HAN (PubMed:23335616). Inhibited by SOC1 (PubMed:23739688). Down-regulated by auxin (2,4D) and auxin response factors (e.g. ARF2 and ARF7) (PubMed:23878229).</text>
</comment>
<comment type="disruption phenotype">
    <text evidence="7 8 9 10 11">Pale green leaves and reduced chlorophyll levels associated with altered regulation of sugar-sensing genes (e.g. HXK1, HXK2, STP13 and PLT6) (PubMed:18417639, PubMed:21453984, PubMed:22102866, PubMed:22811435). Reduced chloroplast size (PubMed:22811435). Faster seed germination. Early flowering. Increased leaves size (PubMed:20844019, PubMed:22102866). Reduced gibberellic acid (GA) levels due to increased GA turnover and associated with reduced expression of GA-anabolizing enzymes (e.g. GA3OX1) but increased expression of GA-catabolizing enzymes (e.g. GA2OX2) (PubMed:20844019). Small seeds with deformed seed coats (PubMed:22102866). The double mutant gnc cga1, lacking both GATA22 and GATA21, exhibits reduced sensitivity to cytokinin (e.g. benzyladenine) toward chloroplasts growth (PubMed:22811435).</text>
</comment>
<comment type="similarity">
    <text evidence="21">Belongs to the type IV zinc-finger family. Class B subfamily.</text>
</comment>
<reference key="1">
    <citation type="journal article" date="1999" name="Nature">
        <title>Sequence and analysis of chromosome 4 of the plant Arabidopsis thaliana.</title>
        <authorList>
            <person name="Mayer K.F.X."/>
            <person name="Schueller C."/>
            <person name="Wambutt R."/>
            <person name="Murphy G."/>
            <person name="Volckaert G."/>
            <person name="Pohl T."/>
            <person name="Duesterhoeft A."/>
            <person name="Stiekema W."/>
            <person name="Entian K.-D."/>
            <person name="Terryn N."/>
            <person name="Harris B."/>
            <person name="Ansorge W."/>
            <person name="Brandt P."/>
            <person name="Grivell L.A."/>
            <person name="Rieger M."/>
            <person name="Weichselgartner M."/>
            <person name="de Simone V."/>
            <person name="Obermaier B."/>
            <person name="Mache R."/>
            <person name="Mueller M."/>
            <person name="Kreis M."/>
            <person name="Delseny M."/>
            <person name="Puigdomenech P."/>
            <person name="Watson M."/>
            <person name="Schmidtheini T."/>
            <person name="Reichert B."/>
            <person name="Portetelle D."/>
            <person name="Perez-Alonso M."/>
            <person name="Boutry M."/>
            <person name="Bancroft I."/>
            <person name="Vos P."/>
            <person name="Hoheisel J."/>
            <person name="Zimmermann W."/>
            <person name="Wedler H."/>
            <person name="Ridley P."/>
            <person name="Langham S.-A."/>
            <person name="McCullagh B."/>
            <person name="Bilham L."/>
            <person name="Robben J."/>
            <person name="van der Schueren J."/>
            <person name="Grymonprez B."/>
            <person name="Chuang Y.-J."/>
            <person name="Vandenbussche F."/>
            <person name="Braeken M."/>
            <person name="Weltjens I."/>
            <person name="Voet M."/>
            <person name="Bastiaens I."/>
            <person name="Aert R."/>
            <person name="Defoor E."/>
            <person name="Weitzenegger T."/>
            <person name="Bothe G."/>
            <person name="Ramsperger U."/>
            <person name="Hilbert H."/>
            <person name="Braun M."/>
            <person name="Holzer E."/>
            <person name="Brandt A."/>
            <person name="Peters S."/>
            <person name="van Staveren M."/>
            <person name="Dirkse W."/>
            <person name="Mooijman P."/>
            <person name="Klein Lankhorst R."/>
            <person name="Rose M."/>
            <person name="Hauf J."/>
            <person name="Koetter P."/>
            <person name="Berneiser S."/>
            <person name="Hempel S."/>
            <person name="Feldpausch M."/>
            <person name="Lamberth S."/>
            <person name="Van den Daele H."/>
            <person name="De Keyser A."/>
            <person name="Buysshaert C."/>
            <person name="Gielen J."/>
            <person name="Villarroel R."/>
            <person name="De Clercq R."/>
            <person name="van Montagu M."/>
            <person name="Rogers J."/>
            <person name="Cronin A."/>
            <person name="Quail M.A."/>
            <person name="Bray-Allen S."/>
            <person name="Clark L."/>
            <person name="Doggett J."/>
            <person name="Hall S."/>
            <person name="Kay M."/>
            <person name="Lennard N."/>
            <person name="McLay K."/>
            <person name="Mayes R."/>
            <person name="Pettett A."/>
            <person name="Rajandream M.A."/>
            <person name="Lyne M."/>
            <person name="Benes V."/>
            <person name="Rechmann S."/>
            <person name="Borkova D."/>
            <person name="Bloecker H."/>
            <person name="Scharfe M."/>
            <person name="Grimm M."/>
            <person name="Loehnert T.-H."/>
            <person name="Dose S."/>
            <person name="de Haan M."/>
            <person name="Maarse A.C."/>
            <person name="Schaefer M."/>
            <person name="Mueller-Auer S."/>
            <person name="Gabel C."/>
            <person name="Fuchs M."/>
            <person name="Fartmann B."/>
            <person name="Granderath K."/>
            <person name="Dauner D."/>
            <person name="Herzl A."/>
            <person name="Neumann S."/>
            <person name="Argiriou A."/>
            <person name="Vitale D."/>
            <person name="Liguori R."/>
            <person name="Piravandi E."/>
            <person name="Massenet O."/>
            <person name="Quigley F."/>
            <person name="Clabauld G."/>
            <person name="Muendlein A."/>
            <person name="Felber R."/>
            <person name="Schnabl S."/>
            <person name="Hiller R."/>
            <person name="Schmidt W."/>
            <person name="Lecharny A."/>
            <person name="Aubourg S."/>
            <person name="Chefdor F."/>
            <person name="Cooke R."/>
            <person name="Berger C."/>
            <person name="Monfort A."/>
            <person name="Casacuberta E."/>
            <person name="Gibbons T."/>
            <person name="Weber N."/>
            <person name="Vandenbol M."/>
            <person name="Bargues M."/>
            <person name="Terol J."/>
            <person name="Torres A."/>
            <person name="Perez-Perez A."/>
            <person name="Purnelle B."/>
            <person name="Bent E."/>
            <person name="Johnson S."/>
            <person name="Tacon D."/>
            <person name="Jesse T."/>
            <person name="Heijnen L."/>
            <person name="Schwarz S."/>
            <person name="Scholler P."/>
            <person name="Heber S."/>
            <person name="Francs P."/>
            <person name="Bielke C."/>
            <person name="Frishman D."/>
            <person name="Haase D."/>
            <person name="Lemcke K."/>
            <person name="Mewes H.-W."/>
            <person name="Stocker S."/>
            <person name="Zaccaria P."/>
            <person name="Bevan M."/>
            <person name="Wilson R.K."/>
            <person name="de la Bastide M."/>
            <person name="Habermann K."/>
            <person name="Parnell L."/>
            <person name="Dedhia N."/>
            <person name="Gnoj L."/>
            <person name="Schutz K."/>
            <person name="Huang E."/>
            <person name="Spiegel L."/>
            <person name="Sekhon M."/>
            <person name="Murray J."/>
            <person name="Sheet P."/>
            <person name="Cordes M."/>
            <person name="Abu-Threideh J."/>
            <person name="Stoneking T."/>
            <person name="Kalicki J."/>
            <person name="Graves T."/>
            <person name="Harmon G."/>
            <person name="Edwards J."/>
            <person name="Latreille P."/>
            <person name="Courtney L."/>
            <person name="Cloud J."/>
            <person name="Abbott A."/>
            <person name="Scott K."/>
            <person name="Johnson D."/>
            <person name="Minx P."/>
            <person name="Bentley D."/>
            <person name="Fulton B."/>
            <person name="Miller N."/>
            <person name="Greco T."/>
            <person name="Kemp K."/>
            <person name="Kramer J."/>
            <person name="Fulton L."/>
            <person name="Mardis E."/>
            <person name="Dante M."/>
            <person name="Pepin K."/>
            <person name="Hillier L.W."/>
            <person name="Nelson J."/>
            <person name="Spieth J."/>
            <person name="Ryan E."/>
            <person name="Andrews S."/>
            <person name="Geisel C."/>
            <person name="Layman D."/>
            <person name="Du H."/>
            <person name="Ali J."/>
            <person name="Berghoff A."/>
            <person name="Jones K."/>
            <person name="Drone K."/>
            <person name="Cotton M."/>
            <person name="Joshu C."/>
            <person name="Antonoiu B."/>
            <person name="Zidanic M."/>
            <person name="Strong C."/>
            <person name="Sun H."/>
            <person name="Lamar B."/>
            <person name="Yordan C."/>
            <person name="Ma P."/>
            <person name="Zhong J."/>
            <person name="Preston R."/>
            <person name="Vil D."/>
            <person name="Shekher M."/>
            <person name="Matero A."/>
            <person name="Shah R."/>
            <person name="Swaby I.K."/>
            <person name="O'Shaughnessy A."/>
            <person name="Rodriguez M."/>
            <person name="Hoffman J."/>
            <person name="Till S."/>
            <person name="Granat S."/>
            <person name="Shohdy N."/>
            <person name="Hasegawa A."/>
            <person name="Hameed A."/>
            <person name="Lodhi M."/>
            <person name="Johnson A."/>
            <person name="Chen E."/>
            <person name="Marra M.A."/>
            <person name="Martienssen R."/>
            <person name="McCombie W.R."/>
        </authorList>
    </citation>
    <scope>NUCLEOTIDE SEQUENCE [LARGE SCALE GENOMIC DNA]</scope>
    <source>
        <strain>cv. Columbia</strain>
    </source>
</reference>
<reference key="2">
    <citation type="journal article" date="2017" name="Plant J.">
        <title>Araport11: a complete reannotation of the Arabidopsis thaliana reference genome.</title>
        <authorList>
            <person name="Cheng C.Y."/>
            <person name="Krishnakumar V."/>
            <person name="Chan A.P."/>
            <person name="Thibaud-Nissen F."/>
            <person name="Schobel S."/>
            <person name="Town C.D."/>
        </authorList>
    </citation>
    <scope>GENOME REANNOTATION</scope>
    <source>
        <strain>cv. Columbia</strain>
    </source>
</reference>
<reference key="3">
    <citation type="journal article" date="2007" name="Plant Physiol.">
        <title>Conservation, convergence, and divergence of light-responsive, circadian-regulated, and tissue-specific expression patterns during evolution of the Arabidopsis GATA gene family.</title>
        <authorList>
            <person name="Manfield I.W."/>
            <person name="Devlin P.F."/>
            <person name="Jen C.-H."/>
            <person name="Westhead D.R."/>
            <person name="Gilmartin P.M."/>
        </authorList>
    </citation>
    <scope>NUCLEOTIDE SEQUENCE [MRNA] OF 1-37</scope>
    <scope>INDUCTION BY LIGHT</scope>
    <scope>TISSUE SPECIFICITY</scope>
</reference>
<reference key="4">
    <citation type="journal article" date="2004" name="Plant Physiol.">
        <title>The GATA family of transcription factors in Arabidopsis and rice.</title>
        <authorList>
            <person name="Reyes J.C."/>
            <person name="Muro-Pastor M.I."/>
            <person name="Florencio F.J."/>
        </authorList>
    </citation>
    <scope>GENE FAMILY ORGANIZATION</scope>
</reference>
<reference key="5">
    <citation type="journal article" date="2005" name="Plant J.">
        <title>Immediate-early and delayed cytokinin response genes of Arabidopsis thaliana identified by genome-wide expression profiling reveal novel cytokinin-sensitive processes and suggest cytokinin action through transcriptional cascades.</title>
        <authorList>
            <person name="Brenner W.G."/>
            <person name="Romanov G.A."/>
            <person name="Koellmer I."/>
            <person name="Buerkle L."/>
            <person name="Schmuelling T."/>
        </authorList>
    </citation>
    <scope>INDUCTION BY CYTOKININ</scope>
</reference>
<reference key="6">
    <citation type="journal article" date="2005" name="Plant J.">
        <title>Genetic analysis of Arabidopsis GATA transcription factor gene family reveals a nitrate-inducible member important for chlorophyll synthesis and glucose sensitivity.</title>
        <authorList>
            <person name="Bi Y.-M."/>
            <person name="Zhang Y."/>
            <person name="Signorelli T."/>
            <person name="Zhao R."/>
            <person name="Zhu T."/>
            <person name="Rothstein S."/>
        </authorList>
    </citation>
    <scope>INDUCTION BY NITRATE</scope>
</reference>
<reference key="7">
    <citation type="journal article" date="2007" name="Biosci. Biotechnol. Biochem.">
        <title>Characterization of a unique GATA family gene that responds to both light and cytokinin in Arabidopsis thaliana.</title>
        <authorList>
            <person name="Naito T."/>
            <person name="Kiba T."/>
            <person name="Koizumi N."/>
            <person name="Yamashino T."/>
            <person name="Mizuno T."/>
        </authorList>
    </citation>
    <scope>INDUCTION BY LIGHT AND CYTOKININ</scope>
    <scope>TISSUE SPECIFICITY</scope>
</reference>
<reference key="8">
    <citation type="journal article" date="2008" name="Plant Physiol.">
        <title>Two GATA transcription factors are downstream effectors of floral homeotic gene action in Arabidopsis.</title>
        <authorList>
            <person name="Mara C.D."/>
            <person name="Irish V.F."/>
        </authorList>
    </citation>
    <scope>FUNCTION</scope>
    <scope>DISRUPTION PHENOTYPE</scope>
    <scope>REGULATION BY AP3/PI</scope>
    <scope>TISSUE SPECIFICITY</scope>
    <scope>DEVELOPMENTAL STAGE</scope>
</reference>
<reference key="9">
    <citation type="journal article" date="2010" name="Genes Dev.">
        <title>The GATA-type transcription factors GNC and GNL/CGA1 repress gibberellin signaling downstream from DELLA proteins and PHYTOCHROME-INTERACTING FACTORS.</title>
        <authorList>
            <person name="Richter R."/>
            <person name="Behringer C."/>
            <person name="Mueller I.K."/>
            <person name="Schwechheimer C."/>
        </authorList>
    </citation>
    <scope>FUNCTION</scope>
    <scope>DISRUPTION PHENOTYPE</scope>
    <scope>INDUCTION BY GIBBERELLIC ACID AND COLD SEED IMBIBITION</scope>
    <scope>DEVELOPMENTAL STAGE</scope>
</reference>
<reference key="10">
    <citation type="journal article" date="2011" name="J. Plant Physiol.">
        <title>Ectopic expression of different cytokinin-regulated transcription factor genes of Arabidopsis thaliana alters plant growth and development.</title>
        <authorList>
            <person name="Koellmer I."/>
            <person name="Werner T."/>
            <person name="Schmuelling T."/>
        </authorList>
    </citation>
    <scope>FUNCTION</scope>
    <scope>DISRUPTION PHENOTYPE</scope>
    <scope>INDUCTION BY CYTOKININ</scope>
</reference>
<reference key="11">
    <citation type="journal article" date="2011" name="PLoS ONE">
        <title>GNC and CGA1 modulate chlorophyll biosynthesis and glutamate synthase (GLU1/Fd-GOGAT) expression in Arabidopsis.</title>
        <authorList>
            <person name="Hudson D."/>
            <person name="Guevara D."/>
            <person name="Yaish M.W."/>
            <person name="Hannam C."/>
            <person name="Long N."/>
            <person name="Clarke J.D."/>
            <person name="Bi Y.-M."/>
            <person name="Rothstein S.J."/>
        </authorList>
    </citation>
    <scope>FUNCTION</scope>
    <scope>DISRUPTION PHENOTYPE</scope>
</reference>
<reference key="12">
    <citation type="journal article" date="2012" name="Plant Physiol.">
        <title>Functional characterization of the GATA transcription factors GNC and CGA1 reveals their key role in chloroplast development, growth, and division in Arabidopsis.</title>
        <authorList>
            <person name="Chiang Y.-H."/>
            <person name="Zubo Y.O."/>
            <person name="Tapken W."/>
            <person name="Kim H.J."/>
            <person name="Lavanway A.M."/>
            <person name="Howard L."/>
            <person name="Pilon M."/>
            <person name="Kieber J.J."/>
            <person name="Schaller G.E."/>
        </authorList>
    </citation>
    <scope>FUNCTION</scope>
    <scope>DISRUPTION PHENOTYPE</scope>
    <scope>TISSUE SPECIFICITY</scope>
    <scope>DEVELOPMENTAL STAGE</scope>
    <scope>INDUCTION BY CYTOKININ</scope>
    <scope>SUBCELLULAR LOCATION</scope>
</reference>
<reference key="13">
    <citation type="journal article" date="2013" name="Plant Cell">
        <title>Transcription repressor HANABA TARANU controls flower development by integrating the actions of multiple hormones, floral organ specification genes, and GATA3 family genes in Arabidopsis.</title>
        <authorList>
            <person name="Zhang X."/>
            <person name="Zhou Y."/>
            <person name="Ding L."/>
            <person name="Wu Z."/>
            <person name="Liu R."/>
            <person name="Meyerowitz E.M."/>
        </authorList>
    </citation>
    <scope>REPRESSION BY HAN</scope>
    <scope>INTERACTION WITH GATA18</scope>
    <scope>DEVELOPMENTAL STAGE</scope>
</reference>
<reference key="14">
    <citation type="journal article" date="2013" name="Plant Physiol.">
        <title>Cross-repressive interactions between SOC1 and the GATAs GNC and GNL/CGA1 in the control of greening, cold tolerance, and flowering time in Arabidopsis.</title>
        <authorList>
            <person name="Richter R."/>
            <person name="Bastakis E."/>
            <person name="Schwechheimer C."/>
        </authorList>
    </citation>
    <scope>FUNCTION</scope>
    <scope>REGULATION BY SOC1</scope>
</reference>
<reference key="15">
    <citation type="journal article" date="2013" name="Proc. Natl. Acad. Sci. U.S.A.">
        <title>Convergence of auxin and gibberellin signaling on the regulation of the GATA transcription factors GNC and GNL in Arabidopsis thaliana.</title>
        <authorList>
            <person name="Richter R."/>
            <person name="Behringer C."/>
            <person name="Zourelidou M."/>
            <person name="Schwechheimer C."/>
        </authorList>
    </citation>
    <scope>FUNCTION</scope>
    <scope>REGULATION BY AUXIN RESPONSE FACTORS</scope>
    <scope>REPRESSION BY AUXIN</scope>
</reference>
<reference key="16">
    <citation type="journal article" date="2014" name="Plant Physiol.">
        <title>Functional diversification within the family of B-GATA transcription factors through the leucine-leucine-methionine domain.</title>
        <authorList>
            <person name="Behringer C."/>
            <person name="Bastakis E."/>
            <person name="Ranftl Q.L."/>
            <person name="Mayer K.F."/>
            <person name="Schwechheimer C."/>
        </authorList>
    </citation>
    <scope>FUNCTION</scope>
    <scope>MUTAGENESIS OF 341-LEU--MET-343</scope>
    <scope>GENE FAMILY</scope>
    <scope>NOMENCLATURE</scope>
</reference>
<reference key="17">
    <citation type="journal article" date="2015" name="Front. Plant Sci.">
        <title>B-GATA transcription factors - insights into their structure, regulation, and role in plant development.</title>
        <authorList>
            <person name="Behringer C."/>
            <person name="Schwechheimer C."/>
        </authorList>
    </citation>
    <scope>GENE FAMILY</scope>
    <scope>REVIEW</scope>
</reference>
<feature type="chain" id="PRO_0000083449" description="Putative GATA transcription factor 22">
    <location>
        <begin position="1"/>
        <end position="352"/>
    </location>
</feature>
<feature type="zinc finger region" description="GATA-type" evidence="1">
    <location>
        <begin position="195"/>
        <end position="249"/>
    </location>
</feature>
<feature type="region of interest" description="Disordered" evidence="3">
    <location>
        <begin position="27"/>
        <end position="53"/>
    </location>
</feature>
<feature type="region of interest" description="Disordered" evidence="3">
    <location>
        <begin position="163"/>
        <end position="189"/>
    </location>
</feature>
<feature type="short sequence motif" description="Nuclear localization signal" evidence="2">
    <location>
        <begin position="112"/>
        <end position="119"/>
    </location>
</feature>
<feature type="compositionally biased region" description="Low complexity" evidence="3">
    <location>
        <begin position="33"/>
        <end position="53"/>
    </location>
</feature>
<feature type="compositionally biased region" description="Polar residues" evidence="3">
    <location>
        <begin position="165"/>
        <end position="189"/>
    </location>
</feature>
<feature type="mutagenesis site" description="Increased inhibition of germination by paclobutrazol (PAC), a gibberellic acid (GA) biosynthesis inhibitor. Slight reduction of hypocotyl elongation, with rounder leaves and shortened petioles." evidence="15">
    <original>LLM</original>
    <variation>AAA</variation>
    <location>
        <begin position="341"/>
        <end position="343"/>
    </location>
</feature>